<gene>
    <name type="ordered locus">GK3412</name>
</gene>
<accession>Q5KUD9</accession>
<dbReference type="EMBL" id="BA000043">
    <property type="protein sequence ID" value="BAD77697.1"/>
    <property type="molecule type" value="Genomic_DNA"/>
</dbReference>
<dbReference type="RefSeq" id="WP_011232879.1">
    <property type="nucleotide sequence ID" value="NC_006510.1"/>
</dbReference>
<dbReference type="SMR" id="Q5KUD9"/>
<dbReference type="STRING" id="235909.GK3412"/>
<dbReference type="KEGG" id="gka:GK3412"/>
<dbReference type="eggNOG" id="COG4844">
    <property type="taxonomic scope" value="Bacteria"/>
</dbReference>
<dbReference type="HOGENOM" id="CLU_163820_1_0_9"/>
<dbReference type="Proteomes" id="UP000001172">
    <property type="component" value="Chromosome"/>
</dbReference>
<dbReference type="HAMAP" id="MF_01863">
    <property type="entry name" value="UPF0741"/>
    <property type="match status" value="1"/>
</dbReference>
<dbReference type="InterPro" id="IPR009910">
    <property type="entry name" value="DUF1450"/>
</dbReference>
<dbReference type="InterPro" id="IPR020880">
    <property type="entry name" value="UPF0741"/>
</dbReference>
<dbReference type="Pfam" id="PF07293">
    <property type="entry name" value="DUF1450"/>
    <property type="match status" value="1"/>
</dbReference>
<evidence type="ECO:0000255" key="1">
    <source>
        <dbReference type="HAMAP-Rule" id="MF_01863"/>
    </source>
</evidence>
<sequence length="75" mass="8476">MANEFRVCDDCKAPNLKTLIPRLKKLDPDAVIKIGCQSYCGPGRKKTFAFVNNRPVAALTEDELIDKIAERLKKR</sequence>
<proteinExistence type="inferred from homology"/>
<reference key="1">
    <citation type="journal article" date="2004" name="Nucleic Acids Res.">
        <title>Thermoadaptation trait revealed by the genome sequence of thermophilic Geobacillus kaustophilus.</title>
        <authorList>
            <person name="Takami H."/>
            <person name="Takaki Y."/>
            <person name="Chee G.-J."/>
            <person name="Nishi S."/>
            <person name="Shimamura S."/>
            <person name="Suzuki H."/>
            <person name="Matsui S."/>
            <person name="Uchiyama I."/>
        </authorList>
    </citation>
    <scope>NUCLEOTIDE SEQUENCE [LARGE SCALE GENOMIC DNA]</scope>
    <source>
        <strain>HTA426</strain>
    </source>
</reference>
<organism>
    <name type="scientific">Geobacillus kaustophilus (strain HTA426)</name>
    <dbReference type="NCBI Taxonomy" id="235909"/>
    <lineage>
        <taxon>Bacteria</taxon>
        <taxon>Bacillati</taxon>
        <taxon>Bacillota</taxon>
        <taxon>Bacilli</taxon>
        <taxon>Bacillales</taxon>
        <taxon>Anoxybacillaceae</taxon>
        <taxon>Geobacillus</taxon>
        <taxon>Geobacillus thermoleovorans group</taxon>
    </lineage>
</organism>
<keyword id="KW-1185">Reference proteome</keyword>
<protein>
    <recommendedName>
        <fullName evidence="1">UPF0741 protein GK3412</fullName>
    </recommendedName>
</protein>
<name>Y3412_GEOKA</name>
<comment type="similarity">
    <text evidence="1">Belongs to the UPF0741 family.</text>
</comment>
<feature type="chain" id="PRO_0000372742" description="UPF0741 protein GK3412">
    <location>
        <begin position="1"/>
        <end position="75"/>
    </location>
</feature>